<dbReference type="EC" id="6.1.1.19" evidence="1"/>
<dbReference type="EMBL" id="AP008229">
    <property type="protein sequence ID" value="BAE67216.1"/>
    <property type="molecule type" value="Genomic_DNA"/>
</dbReference>
<dbReference type="RefSeq" id="WP_011407446.1">
    <property type="nucleotide sequence ID" value="NC_007705.1"/>
</dbReference>
<dbReference type="SMR" id="Q2P8B1"/>
<dbReference type="KEGG" id="xom:XOO0461"/>
<dbReference type="HOGENOM" id="CLU_006406_0_1_6"/>
<dbReference type="GO" id="GO:0005737">
    <property type="term" value="C:cytoplasm"/>
    <property type="evidence" value="ECO:0007669"/>
    <property type="project" value="UniProtKB-SubCell"/>
</dbReference>
<dbReference type="GO" id="GO:0004814">
    <property type="term" value="F:arginine-tRNA ligase activity"/>
    <property type="evidence" value="ECO:0007669"/>
    <property type="project" value="UniProtKB-UniRule"/>
</dbReference>
<dbReference type="GO" id="GO:0005524">
    <property type="term" value="F:ATP binding"/>
    <property type="evidence" value="ECO:0007669"/>
    <property type="project" value="UniProtKB-UniRule"/>
</dbReference>
<dbReference type="GO" id="GO:0006420">
    <property type="term" value="P:arginyl-tRNA aminoacylation"/>
    <property type="evidence" value="ECO:0007669"/>
    <property type="project" value="UniProtKB-UniRule"/>
</dbReference>
<dbReference type="CDD" id="cd00671">
    <property type="entry name" value="ArgRS_core"/>
    <property type="match status" value="1"/>
</dbReference>
<dbReference type="FunFam" id="1.10.730.10:FF:000008">
    <property type="entry name" value="Arginine--tRNA ligase"/>
    <property type="match status" value="1"/>
</dbReference>
<dbReference type="FunFam" id="3.30.1360.70:FF:000003">
    <property type="entry name" value="Arginine--tRNA ligase"/>
    <property type="match status" value="1"/>
</dbReference>
<dbReference type="FunFam" id="3.40.50.620:FF:000062">
    <property type="entry name" value="Arginine--tRNA ligase"/>
    <property type="match status" value="1"/>
</dbReference>
<dbReference type="Gene3D" id="3.30.1360.70">
    <property type="entry name" value="Arginyl tRNA synthetase N-terminal domain"/>
    <property type="match status" value="1"/>
</dbReference>
<dbReference type="Gene3D" id="3.40.50.620">
    <property type="entry name" value="HUPs"/>
    <property type="match status" value="1"/>
</dbReference>
<dbReference type="Gene3D" id="1.10.730.10">
    <property type="entry name" value="Isoleucyl-tRNA Synthetase, Domain 1"/>
    <property type="match status" value="1"/>
</dbReference>
<dbReference type="HAMAP" id="MF_00123">
    <property type="entry name" value="Arg_tRNA_synth"/>
    <property type="match status" value="1"/>
</dbReference>
<dbReference type="InterPro" id="IPR001412">
    <property type="entry name" value="aa-tRNA-synth_I_CS"/>
</dbReference>
<dbReference type="InterPro" id="IPR001278">
    <property type="entry name" value="Arg-tRNA-ligase"/>
</dbReference>
<dbReference type="InterPro" id="IPR005148">
    <property type="entry name" value="Arg-tRNA-synth_N"/>
</dbReference>
<dbReference type="InterPro" id="IPR036695">
    <property type="entry name" value="Arg-tRNA-synth_N_sf"/>
</dbReference>
<dbReference type="InterPro" id="IPR035684">
    <property type="entry name" value="ArgRS_core"/>
</dbReference>
<dbReference type="InterPro" id="IPR008909">
    <property type="entry name" value="DALR_anticod-bd"/>
</dbReference>
<dbReference type="InterPro" id="IPR014729">
    <property type="entry name" value="Rossmann-like_a/b/a_fold"/>
</dbReference>
<dbReference type="InterPro" id="IPR009080">
    <property type="entry name" value="tRNAsynth_Ia_anticodon-bd"/>
</dbReference>
<dbReference type="NCBIfam" id="TIGR00456">
    <property type="entry name" value="argS"/>
    <property type="match status" value="1"/>
</dbReference>
<dbReference type="PANTHER" id="PTHR11956:SF5">
    <property type="entry name" value="ARGININE--TRNA LIGASE, CYTOPLASMIC"/>
    <property type="match status" value="1"/>
</dbReference>
<dbReference type="PANTHER" id="PTHR11956">
    <property type="entry name" value="ARGINYL-TRNA SYNTHETASE"/>
    <property type="match status" value="1"/>
</dbReference>
<dbReference type="Pfam" id="PF03485">
    <property type="entry name" value="Arg_tRNA_synt_N"/>
    <property type="match status" value="1"/>
</dbReference>
<dbReference type="Pfam" id="PF05746">
    <property type="entry name" value="DALR_1"/>
    <property type="match status" value="1"/>
</dbReference>
<dbReference type="Pfam" id="PF00750">
    <property type="entry name" value="tRNA-synt_1d"/>
    <property type="match status" value="1"/>
</dbReference>
<dbReference type="PRINTS" id="PR01038">
    <property type="entry name" value="TRNASYNTHARG"/>
</dbReference>
<dbReference type="SMART" id="SM01016">
    <property type="entry name" value="Arg_tRNA_synt_N"/>
    <property type="match status" value="1"/>
</dbReference>
<dbReference type="SMART" id="SM00836">
    <property type="entry name" value="DALR_1"/>
    <property type="match status" value="1"/>
</dbReference>
<dbReference type="SUPFAM" id="SSF47323">
    <property type="entry name" value="Anticodon-binding domain of a subclass of class I aminoacyl-tRNA synthetases"/>
    <property type="match status" value="1"/>
</dbReference>
<dbReference type="SUPFAM" id="SSF55190">
    <property type="entry name" value="Arginyl-tRNA synthetase (ArgRS), N-terminal 'additional' domain"/>
    <property type="match status" value="1"/>
</dbReference>
<dbReference type="SUPFAM" id="SSF52374">
    <property type="entry name" value="Nucleotidylyl transferase"/>
    <property type="match status" value="1"/>
</dbReference>
<dbReference type="PROSITE" id="PS00178">
    <property type="entry name" value="AA_TRNA_LIGASE_I"/>
    <property type="match status" value="1"/>
</dbReference>
<organism>
    <name type="scientific">Xanthomonas oryzae pv. oryzae (strain MAFF 311018)</name>
    <dbReference type="NCBI Taxonomy" id="342109"/>
    <lineage>
        <taxon>Bacteria</taxon>
        <taxon>Pseudomonadati</taxon>
        <taxon>Pseudomonadota</taxon>
        <taxon>Gammaproteobacteria</taxon>
        <taxon>Lysobacterales</taxon>
        <taxon>Lysobacteraceae</taxon>
        <taxon>Xanthomonas</taxon>
    </lineage>
</organism>
<accession>Q2P8B1</accession>
<comment type="catalytic activity">
    <reaction evidence="1">
        <text>tRNA(Arg) + L-arginine + ATP = L-arginyl-tRNA(Arg) + AMP + diphosphate</text>
        <dbReference type="Rhea" id="RHEA:20301"/>
        <dbReference type="Rhea" id="RHEA-COMP:9658"/>
        <dbReference type="Rhea" id="RHEA-COMP:9673"/>
        <dbReference type="ChEBI" id="CHEBI:30616"/>
        <dbReference type="ChEBI" id="CHEBI:32682"/>
        <dbReference type="ChEBI" id="CHEBI:33019"/>
        <dbReference type="ChEBI" id="CHEBI:78442"/>
        <dbReference type="ChEBI" id="CHEBI:78513"/>
        <dbReference type="ChEBI" id="CHEBI:456215"/>
        <dbReference type="EC" id="6.1.1.19"/>
    </reaction>
</comment>
<comment type="subunit">
    <text evidence="1">Monomer.</text>
</comment>
<comment type="subcellular location">
    <subcellularLocation>
        <location evidence="1">Cytoplasm</location>
    </subcellularLocation>
</comment>
<comment type="similarity">
    <text evidence="1">Belongs to the class-I aminoacyl-tRNA synthetase family.</text>
</comment>
<feature type="chain" id="PRO_0000242126" description="Arginine--tRNA ligase">
    <location>
        <begin position="1"/>
        <end position="562"/>
    </location>
</feature>
<feature type="short sequence motif" description="'HIGH' region">
    <location>
        <begin position="129"/>
        <end position="139"/>
    </location>
</feature>
<proteinExistence type="inferred from homology"/>
<reference key="1">
    <citation type="journal article" date="2005" name="Jpn. Agric. Res. Q.">
        <title>Genome sequence of Xanthomonas oryzae pv. oryzae suggests contribution of large numbers of effector genes and insertion sequences to its race diversity.</title>
        <authorList>
            <person name="Ochiai H."/>
            <person name="Inoue Y."/>
            <person name="Takeya M."/>
            <person name="Sasaki A."/>
            <person name="Kaku H."/>
        </authorList>
    </citation>
    <scope>NUCLEOTIDE SEQUENCE [LARGE SCALE GENOMIC DNA]</scope>
    <source>
        <strain>MAFF 311018</strain>
    </source>
</reference>
<name>SYR_XANOM</name>
<sequence>MKALLRALIGQGIEALRANGTLPGDTLPPDFVVERPKTREHGDFATNAAMLLAKAARSNPRALAQALLTALPDSNDVTKVEIAGPGFINFHLAPTAYQREVAHVIKQGHDYGRGLAGNGRSVGVEYVSANPTGPLHVGHGRAAAIGDSLARVLDANGWNVKREFYYNDAGVQIENLALSVQARAQGLTPDSAGWPENGYRGDYIADVANAYLAGDTVDMEGHLVTGTKDPADLESIRRFAVAYLRNEQNHDLAAFRVDFDIYFLESSLYKDGKVEEAVQKLIASGHTYEEGGALWLKSTDFGDDKDRVMRKSDGTYTYFVPDVAYHLTKWQRGYERAITELGADHHGSLTRVRAGLQAMELGIPQGWPEYVLHQMVTVMRDGEEVKLGKRAGGYVTLRDLIEETSADAVRWFLIARKPDSQLTFDIDLARAQSNDNPVFYVQYAHARVCSVLRQAQEKGYKYDQVHGLAELARLDDEHSLAVMLELSRYPEVVEIAGQTLEPYQIAQYLRELAHAFHTWYHNSKVLVDDAAERDAKLTLAVATQQVLANGLELLGVSAPEKM</sequence>
<keyword id="KW-0030">Aminoacyl-tRNA synthetase</keyword>
<keyword id="KW-0067">ATP-binding</keyword>
<keyword id="KW-0963">Cytoplasm</keyword>
<keyword id="KW-0436">Ligase</keyword>
<keyword id="KW-0547">Nucleotide-binding</keyword>
<keyword id="KW-0648">Protein biosynthesis</keyword>
<protein>
    <recommendedName>
        <fullName evidence="1">Arginine--tRNA ligase</fullName>
        <ecNumber evidence="1">6.1.1.19</ecNumber>
    </recommendedName>
    <alternativeName>
        <fullName evidence="1">Arginyl-tRNA synthetase</fullName>
        <shortName evidence="1">ArgRS</shortName>
    </alternativeName>
</protein>
<gene>
    <name evidence="1" type="primary">argS</name>
    <name type="ordered locus">XOO0461</name>
</gene>
<evidence type="ECO:0000255" key="1">
    <source>
        <dbReference type="HAMAP-Rule" id="MF_00123"/>
    </source>
</evidence>